<protein>
    <recommendedName>
        <fullName evidence="2">Major capsid protein</fullName>
    </recommendedName>
    <alternativeName>
        <fullName evidence="3">Major head protein</fullName>
    </alternativeName>
</protein>
<sequence length="403" mass="46121">MAEKSTKNETALLVAQSAKSALQDFNHTYSKSWTFGDKWDNSNTMFETFVNKFLFPKINETLLIDIALGNRFNWLAKEQDFIGQYSEEYVIMDTVPINMDLSKNEELMLKRNYPRMATKLYGSGIVKKQKFTLNNNDTRFNFQTLADATNYALGVYKKKISDINVLEEKEMRAMLVDYSLNQLSESNVRKATSKEDLASKVFEAILNLQNNSAKYNEVHRASGGAIGQYTTVSKLKDIVILTTDSLKSYLLDTKIANTFQVAGIDFTDHVISFDDLGGVFKVTKDIVVSSDESVNFLRAYGDYQTHKGDTIPVGSVFTYDVSKLSEFKDSVEEIKPKSDLYAFILDINSIKYKRYTKGMLKQPFYNGEFDEVTHWIHYYSFKAISPFFNKILITDQDVTPRTE</sequence>
<evidence type="ECO:0000269" key="1">
    <source ref="2"/>
</evidence>
<evidence type="ECO:0000303" key="2">
    <source>
    </source>
</evidence>
<evidence type="ECO:0000305" key="3"/>
<evidence type="ECO:0000305" key="4">
    <source ref="2"/>
</evidence>
<evidence type="ECO:0000312" key="5">
    <source>
        <dbReference type="Proteomes" id="UP000007856"/>
    </source>
</evidence>
<organism evidence="5">
    <name type="scientific">Staphylococcus phage S24-1</name>
    <dbReference type="NCBI Taxonomy" id="1010614"/>
    <lineage>
        <taxon>Viruses</taxon>
        <taxon>Duplodnaviria</taxon>
        <taxon>Heunggongvirae</taxon>
        <taxon>Uroviricota</taxon>
        <taxon>Caudoviricetes</taxon>
        <taxon>Rountreeviridae</taxon>
        <taxon>Rakietenvirinae</taxon>
        <taxon>Rosenblumvirus</taxon>
        <taxon>Rosenblumvirus S241</taxon>
    </lineage>
</organism>
<gene>
    <name evidence="2" type="ORF">ORF19</name>
</gene>
<dbReference type="EMBL" id="AB626962">
    <property type="protein sequence ID" value="BAL42306.1"/>
    <property type="molecule type" value="Genomic_DNA"/>
</dbReference>
<dbReference type="RefSeq" id="YP_004957434.1">
    <property type="nucleotide sequence ID" value="NC_016565.1"/>
</dbReference>
<dbReference type="SMR" id="G9M952"/>
<dbReference type="KEGG" id="vg:11536605"/>
<dbReference type="OrthoDB" id="2742at10239"/>
<dbReference type="Proteomes" id="UP000007856">
    <property type="component" value="Genome"/>
</dbReference>
<dbReference type="GO" id="GO:0019028">
    <property type="term" value="C:viral capsid"/>
    <property type="evidence" value="ECO:0007669"/>
    <property type="project" value="UniProtKB-KW"/>
</dbReference>
<comment type="function">
    <text evidence="4">Assembles to form an icosahedral capsid.</text>
</comment>
<comment type="subcellular location">
    <subcellularLocation>
        <location evidence="1">Virion</location>
    </subcellularLocation>
</comment>
<organismHost>
    <name type="scientific">Staphylococcus aureus</name>
    <dbReference type="NCBI Taxonomy" id="1280"/>
</organismHost>
<accession>G9M952</accession>
<accession>P86944</accession>
<proteinExistence type="evidence at protein level"/>
<keyword id="KW-0167">Capsid protein</keyword>
<keyword id="KW-0903">Direct protein sequencing</keyword>
<keyword id="KW-0946">Virion</keyword>
<reference evidence="5" key="1">
    <citation type="journal article" date="2014" name="MicrobiologyOpen">
        <title>In silico analysis of AHJD-like viruses, Staphylococcus aureus phages S24-1 and S13', and study of phage S24-1 adsorption.</title>
        <authorList>
            <person name="Uchiyama J."/>
            <person name="Takemura-Uchiyama I."/>
            <person name="Kato S."/>
            <person name="Sato M."/>
            <person name="Ujihara T."/>
            <person name="Matsui H."/>
            <person name="Hanaki H."/>
            <person name="Daibata M."/>
            <person name="Matsuzaki S."/>
        </authorList>
    </citation>
    <scope>NUCLEOTIDE SEQUENCE [LARGE SCALE GENOMIC DNA]</scope>
</reference>
<reference evidence="3" key="2">
    <citation type="submission" date="2011-06" db="UniProtKB">
        <authorList>
            <person name="Uchiyama J."/>
            <person name="Daibata M."/>
            <person name="Matsuzaki S."/>
        </authorList>
    </citation>
    <scope>PROTEIN SEQUENCE OF 2-21</scope>
    <scope>SUBCELLULAR LOCATION</scope>
</reference>
<name>CAPSD_BPPS4</name>
<feature type="initiator methionine" description="Removed" evidence="4">
    <location>
        <position position="1"/>
    </location>
</feature>
<feature type="chain" id="PRO_0000439199" description="Major capsid protein" evidence="4">
    <location>
        <begin position="2"/>
        <end position="403"/>
    </location>
</feature>